<reference key="1">
    <citation type="journal article" date="2006" name="PLoS Biol.">
        <title>The genome of deep-sea vent chemolithoautotroph Thiomicrospira crunogena XCL-2.</title>
        <authorList>
            <person name="Scott K.M."/>
            <person name="Sievert S.M."/>
            <person name="Abril F.N."/>
            <person name="Ball L.A."/>
            <person name="Barrett C.J."/>
            <person name="Blake R.A."/>
            <person name="Boller A.J."/>
            <person name="Chain P.S.G."/>
            <person name="Clark J.A."/>
            <person name="Davis C.R."/>
            <person name="Detter C."/>
            <person name="Do K.F."/>
            <person name="Dobrinski K.P."/>
            <person name="Faza B.I."/>
            <person name="Fitzpatrick K.A."/>
            <person name="Freyermuth S.K."/>
            <person name="Harmer T.L."/>
            <person name="Hauser L.J."/>
            <person name="Huegler M."/>
            <person name="Kerfeld C.A."/>
            <person name="Klotz M.G."/>
            <person name="Kong W.W."/>
            <person name="Land M."/>
            <person name="Lapidus A."/>
            <person name="Larimer F.W."/>
            <person name="Longo D.L."/>
            <person name="Lucas S."/>
            <person name="Malfatti S.A."/>
            <person name="Massey S.E."/>
            <person name="Martin D.D."/>
            <person name="McCuddin Z."/>
            <person name="Meyer F."/>
            <person name="Moore J.L."/>
            <person name="Ocampo L.H. Jr."/>
            <person name="Paul J.H."/>
            <person name="Paulsen I.T."/>
            <person name="Reep D.K."/>
            <person name="Ren Q."/>
            <person name="Ross R.L."/>
            <person name="Sato P.Y."/>
            <person name="Thomas P."/>
            <person name="Tinkham L.E."/>
            <person name="Zeruth G.T."/>
        </authorList>
    </citation>
    <scope>NUCLEOTIDE SEQUENCE [LARGE SCALE GENOMIC DNA]</scope>
    <source>
        <strain>DSM 25203 / XCL-2</strain>
    </source>
</reference>
<gene>
    <name evidence="1" type="primary">rpsH</name>
    <name type="ordered locus">Tcr_0309</name>
</gene>
<feature type="chain" id="PRO_0000228869" description="Small ribosomal subunit protein uS8">
    <location>
        <begin position="1"/>
        <end position="131"/>
    </location>
</feature>
<dbReference type="EMBL" id="CP000109">
    <property type="protein sequence ID" value="ABB40905.1"/>
    <property type="molecule type" value="Genomic_DNA"/>
</dbReference>
<dbReference type="SMR" id="Q31IW8"/>
<dbReference type="STRING" id="317025.Tcr_0309"/>
<dbReference type="KEGG" id="tcx:Tcr_0309"/>
<dbReference type="eggNOG" id="COG0096">
    <property type="taxonomic scope" value="Bacteria"/>
</dbReference>
<dbReference type="HOGENOM" id="CLU_098428_0_0_6"/>
<dbReference type="OrthoDB" id="9802617at2"/>
<dbReference type="GO" id="GO:1990904">
    <property type="term" value="C:ribonucleoprotein complex"/>
    <property type="evidence" value="ECO:0007669"/>
    <property type="project" value="UniProtKB-KW"/>
</dbReference>
<dbReference type="GO" id="GO:0005840">
    <property type="term" value="C:ribosome"/>
    <property type="evidence" value="ECO:0007669"/>
    <property type="project" value="UniProtKB-KW"/>
</dbReference>
<dbReference type="GO" id="GO:0019843">
    <property type="term" value="F:rRNA binding"/>
    <property type="evidence" value="ECO:0007669"/>
    <property type="project" value="UniProtKB-UniRule"/>
</dbReference>
<dbReference type="GO" id="GO:0003735">
    <property type="term" value="F:structural constituent of ribosome"/>
    <property type="evidence" value="ECO:0007669"/>
    <property type="project" value="InterPro"/>
</dbReference>
<dbReference type="GO" id="GO:0006412">
    <property type="term" value="P:translation"/>
    <property type="evidence" value="ECO:0007669"/>
    <property type="project" value="UniProtKB-UniRule"/>
</dbReference>
<dbReference type="FunFam" id="3.30.1370.30:FF:000002">
    <property type="entry name" value="30S ribosomal protein S8"/>
    <property type="match status" value="1"/>
</dbReference>
<dbReference type="FunFam" id="3.30.1490.10:FF:000001">
    <property type="entry name" value="30S ribosomal protein S8"/>
    <property type="match status" value="1"/>
</dbReference>
<dbReference type="Gene3D" id="3.30.1370.30">
    <property type="match status" value="1"/>
</dbReference>
<dbReference type="Gene3D" id="3.30.1490.10">
    <property type="match status" value="1"/>
</dbReference>
<dbReference type="HAMAP" id="MF_01302_B">
    <property type="entry name" value="Ribosomal_uS8_B"/>
    <property type="match status" value="1"/>
</dbReference>
<dbReference type="InterPro" id="IPR000630">
    <property type="entry name" value="Ribosomal_uS8"/>
</dbReference>
<dbReference type="InterPro" id="IPR047863">
    <property type="entry name" value="Ribosomal_uS8_CS"/>
</dbReference>
<dbReference type="InterPro" id="IPR035987">
    <property type="entry name" value="Ribosomal_uS8_sf"/>
</dbReference>
<dbReference type="NCBIfam" id="NF001109">
    <property type="entry name" value="PRK00136.1"/>
    <property type="match status" value="1"/>
</dbReference>
<dbReference type="PANTHER" id="PTHR11758">
    <property type="entry name" value="40S RIBOSOMAL PROTEIN S15A"/>
    <property type="match status" value="1"/>
</dbReference>
<dbReference type="Pfam" id="PF00410">
    <property type="entry name" value="Ribosomal_S8"/>
    <property type="match status" value="1"/>
</dbReference>
<dbReference type="SUPFAM" id="SSF56047">
    <property type="entry name" value="Ribosomal protein S8"/>
    <property type="match status" value="1"/>
</dbReference>
<dbReference type="PROSITE" id="PS00053">
    <property type="entry name" value="RIBOSOMAL_S8"/>
    <property type="match status" value="1"/>
</dbReference>
<sequence>MSMSDPIADMLTRIRNGQIAGHSNVVMPSSKVKVAVAKVLTGEGYVSSYSVSDKNGKSELSVDLKYFEGQPVIEMLKRVSRPGLRVYKNKDELPKVIGGLGVAVVSTSKGIMSDRDARKAGIGGEIICYIA</sequence>
<comment type="function">
    <text evidence="1">One of the primary rRNA binding proteins, it binds directly to 16S rRNA central domain where it helps coordinate assembly of the platform of the 30S subunit.</text>
</comment>
<comment type="subunit">
    <text evidence="1">Part of the 30S ribosomal subunit. Contacts proteins S5 and S12.</text>
</comment>
<comment type="similarity">
    <text evidence="1">Belongs to the universal ribosomal protein uS8 family.</text>
</comment>
<evidence type="ECO:0000255" key="1">
    <source>
        <dbReference type="HAMAP-Rule" id="MF_01302"/>
    </source>
</evidence>
<evidence type="ECO:0000305" key="2"/>
<protein>
    <recommendedName>
        <fullName evidence="1">Small ribosomal subunit protein uS8</fullName>
    </recommendedName>
    <alternativeName>
        <fullName evidence="2">30S ribosomal protein S8</fullName>
    </alternativeName>
</protein>
<accession>Q31IW8</accession>
<proteinExistence type="inferred from homology"/>
<keyword id="KW-0687">Ribonucleoprotein</keyword>
<keyword id="KW-0689">Ribosomal protein</keyword>
<keyword id="KW-0694">RNA-binding</keyword>
<keyword id="KW-0699">rRNA-binding</keyword>
<name>RS8_HYDCU</name>
<organism>
    <name type="scientific">Hydrogenovibrio crunogenus (strain DSM 25203 / XCL-2)</name>
    <name type="common">Thiomicrospira crunogena</name>
    <dbReference type="NCBI Taxonomy" id="317025"/>
    <lineage>
        <taxon>Bacteria</taxon>
        <taxon>Pseudomonadati</taxon>
        <taxon>Pseudomonadota</taxon>
        <taxon>Gammaproteobacteria</taxon>
        <taxon>Thiotrichales</taxon>
        <taxon>Piscirickettsiaceae</taxon>
        <taxon>Hydrogenovibrio</taxon>
    </lineage>
</organism>